<organism>
    <name type="scientific">Shigella flexneri</name>
    <dbReference type="NCBI Taxonomy" id="623"/>
    <lineage>
        <taxon>Bacteria</taxon>
        <taxon>Pseudomonadati</taxon>
        <taxon>Pseudomonadota</taxon>
        <taxon>Gammaproteobacteria</taxon>
        <taxon>Enterobacterales</taxon>
        <taxon>Enterobacteriaceae</taxon>
        <taxon>Shigella</taxon>
    </lineage>
</organism>
<accession>P0A1M8</accession>
<accession>P40707</accession>
<protein>
    <recommendedName>
        <fullName>Surface presentation of antigens protein SpaS</fullName>
    </recommendedName>
    <alternativeName>
        <fullName>Spa40 protein</fullName>
    </alternativeName>
</protein>
<name>SPAS_SHIFL</name>
<dbReference type="EMBL" id="D13663">
    <property type="protein sequence ID" value="BAA02832.1"/>
    <property type="molecule type" value="Genomic_DNA"/>
</dbReference>
<dbReference type="EMBL" id="AL391753">
    <property type="protein sequence ID" value="CAC05831.1"/>
    <property type="molecule type" value="Genomic_DNA"/>
</dbReference>
<dbReference type="EMBL" id="AF348706">
    <property type="protein sequence ID" value="AAK18475.1"/>
    <property type="molecule type" value="Genomic_DNA"/>
</dbReference>
<dbReference type="EMBL" id="AF386526">
    <property type="protein sequence ID" value="AAL72303.1"/>
    <property type="molecule type" value="Genomic_DNA"/>
</dbReference>
<dbReference type="PIR" id="A38908">
    <property type="entry name" value="A38908"/>
</dbReference>
<dbReference type="RefSeq" id="NP_085319.1">
    <property type="nucleotide sequence ID" value="NC_002698.1"/>
</dbReference>
<dbReference type="RefSeq" id="NP_858289.1">
    <property type="nucleotide sequence ID" value="NC_004851.1"/>
</dbReference>
<dbReference type="RefSeq" id="WP_001284686.1">
    <property type="nucleotide sequence ID" value="NZ_WPGS01000043.1"/>
</dbReference>
<dbReference type="RefSeq" id="YP_009062513.1">
    <property type="nucleotide sequence ID" value="NC_024996.1"/>
</dbReference>
<dbReference type="PDB" id="2VT1">
    <property type="method" value="X-ray"/>
    <property type="resolution" value="2.00 A"/>
    <property type="chains" value="A=207-257, B=258-342"/>
</dbReference>
<dbReference type="PDB" id="8AXK">
    <property type="method" value="EM"/>
    <property type="resolution" value="4.05 A"/>
    <property type="chains" value="K=1-342"/>
</dbReference>
<dbReference type="PDBsum" id="2VT1"/>
<dbReference type="PDBsum" id="8AXK"/>
<dbReference type="EMDB" id="EMD-15700"/>
<dbReference type="SMR" id="P0A1M8"/>
<dbReference type="MEROPS" id="N06.002"/>
<dbReference type="TCDB" id="3.A.6.1.2">
    <property type="family name" value="the type iii (virulence-related) secretory pathway (iiisp) family"/>
</dbReference>
<dbReference type="PaxDb" id="198214-CP0156"/>
<dbReference type="GeneID" id="1237999"/>
<dbReference type="KEGG" id="sfl:CP0156"/>
<dbReference type="PATRIC" id="fig|198214.7.peg.5401"/>
<dbReference type="HOGENOM" id="CLU_041013_1_3_6"/>
<dbReference type="EvolutionaryTrace" id="P0A1M8"/>
<dbReference type="Proteomes" id="UP000001006">
    <property type="component" value="Plasmid pCP301"/>
</dbReference>
<dbReference type="GO" id="GO:0005886">
    <property type="term" value="C:plasma membrane"/>
    <property type="evidence" value="ECO:0007669"/>
    <property type="project" value="UniProtKB-SubCell"/>
</dbReference>
<dbReference type="GO" id="GO:0009306">
    <property type="term" value="P:protein secretion"/>
    <property type="evidence" value="ECO:0007669"/>
    <property type="project" value="InterPro"/>
</dbReference>
<dbReference type="Gene3D" id="6.10.250.2080">
    <property type="match status" value="1"/>
</dbReference>
<dbReference type="Gene3D" id="3.40.1690.10">
    <property type="entry name" value="secretion proteins EscU"/>
    <property type="match status" value="1"/>
</dbReference>
<dbReference type="InterPro" id="IPR006307">
    <property type="entry name" value="BsaZ-like"/>
</dbReference>
<dbReference type="InterPro" id="IPR006135">
    <property type="entry name" value="T3SS_substrate_exporter"/>
</dbReference>
<dbReference type="InterPro" id="IPR029025">
    <property type="entry name" value="T3SS_substrate_exporter_C"/>
</dbReference>
<dbReference type="NCBIfam" id="TIGR01404">
    <property type="entry name" value="FlhB_rel_III"/>
    <property type="match status" value="1"/>
</dbReference>
<dbReference type="NCBIfam" id="NF006017">
    <property type="entry name" value="PRK08156.1"/>
    <property type="match status" value="1"/>
</dbReference>
<dbReference type="PANTHER" id="PTHR30531">
    <property type="entry name" value="FLAGELLAR BIOSYNTHETIC PROTEIN FLHB"/>
    <property type="match status" value="1"/>
</dbReference>
<dbReference type="PANTHER" id="PTHR30531:SF14">
    <property type="entry name" value="SURFACE PRESENTATION OF ANTIGENS PROTEIN SPAS"/>
    <property type="match status" value="1"/>
</dbReference>
<dbReference type="Pfam" id="PF01312">
    <property type="entry name" value="Bac_export_2"/>
    <property type="match status" value="1"/>
</dbReference>
<dbReference type="PRINTS" id="PR00950">
    <property type="entry name" value="TYPE3IMSPROT"/>
</dbReference>
<dbReference type="SUPFAM" id="SSF160544">
    <property type="entry name" value="EscU C-terminal domain-like"/>
    <property type="match status" value="1"/>
</dbReference>
<proteinExistence type="evidence at protein level"/>
<geneLocation type="plasmid">
    <name>pWR100</name>
</geneLocation>
<geneLocation type="plasmid">
    <name>pWR501</name>
</geneLocation>
<geneLocation type="plasmid">
    <name>pMYSH6000</name>
</geneLocation>
<geneLocation type="plasmid">
    <name>pCP301</name>
</geneLocation>
<comment type="function">
    <text>Required for surface presentation of invasion plasmid antigens. Could play a role in preserving the translocation competence of the ipa antigens. Required for invasion and for secretion of the three ipa proteins.</text>
</comment>
<comment type="subcellular location">
    <subcellularLocation>
        <location evidence="2">Cell inner membrane</location>
        <topology evidence="2">Multi-pass membrane protein</topology>
    </subcellularLocation>
</comment>
<comment type="similarity">
    <text evidence="2">Belongs to the type III secretion exporter family.</text>
</comment>
<gene>
    <name type="primary">spaS</name>
    <name type="synonym">spa40</name>
    <name type="ordered locus">CP0156</name>
</gene>
<keyword id="KW-0002">3D-structure</keyword>
<keyword id="KW-0997">Cell inner membrane</keyword>
<keyword id="KW-1003">Cell membrane</keyword>
<keyword id="KW-0472">Membrane</keyword>
<keyword id="KW-0614">Plasmid</keyword>
<keyword id="KW-1185">Reference proteome</keyword>
<keyword id="KW-0812">Transmembrane</keyword>
<keyword id="KW-1133">Transmembrane helix</keyword>
<keyword id="KW-0843">Virulence</keyword>
<feature type="chain" id="PRO_0000180957" description="Surface presentation of antigens protein SpaS">
    <location>
        <begin position="1"/>
        <end position="342"/>
    </location>
</feature>
<feature type="transmembrane region" description="Helical" evidence="1">
    <location>
        <begin position="28"/>
        <end position="48"/>
    </location>
</feature>
<feature type="transmembrane region" description="Helical" evidence="1">
    <location>
        <begin position="70"/>
        <end position="90"/>
    </location>
</feature>
<feature type="transmembrane region" description="Helical" evidence="1">
    <location>
        <begin position="133"/>
        <end position="153"/>
    </location>
</feature>
<feature type="transmembrane region" description="Helical" evidence="1">
    <location>
        <begin position="158"/>
        <end position="178"/>
    </location>
</feature>
<feature type="transmembrane region" description="Helical" evidence="1">
    <location>
        <begin position="181"/>
        <end position="201"/>
    </location>
</feature>
<feature type="transmembrane region" description="Helical" evidence="1">
    <location>
        <begin position="260"/>
        <end position="280"/>
    </location>
</feature>
<feature type="helix" evidence="3">
    <location>
        <begin position="242"/>
        <end position="249"/>
    </location>
</feature>
<feature type="strand" evidence="3">
    <location>
        <begin position="252"/>
        <end position="256"/>
    </location>
</feature>
<feature type="strand" evidence="3">
    <location>
        <begin position="260"/>
        <end position="266"/>
    </location>
</feature>
<feature type="turn" evidence="3">
    <location>
        <begin position="269"/>
        <end position="271"/>
    </location>
</feature>
<feature type="strand" evidence="3">
    <location>
        <begin position="276"/>
        <end position="282"/>
    </location>
</feature>
<feature type="helix" evidence="3">
    <location>
        <begin position="283"/>
        <end position="295"/>
    </location>
</feature>
<feature type="strand" evidence="3">
    <location>
        <begin position="300"/>
        <end position="302"/>
    </location>
</feature>
<feature type="helix" evidence="3">
    <location>
        <begin position="304"/>
        <end position="313"/>
    </location>
</feature>
<feature type="strand" evidence="3">
    <location>
        <begin position="316"/>
        <end position="319"/>
    </location>
</feature>
<feature type="turn" evidence="3">
    <location>
        <begin position="322"/>
        <end position="324"/>
    </location>
</feature>
<feature type="helix" evidence="3">
    <location>
        <begin position="325"/>
        <end position="337"/>
    </location>
</feature>
<sequence>MANKTEKPTPKKLKDAAKKGQSFKFKDLTTVVIILVGTFTIISFFSLSDVMLLYRYVIINDFEINEGKYFFAVVIVFFKIIGFPLFFCVLSAVLPTLVQTKFVLATKAIKIDFSVLNPVKGLKKIFSIKTIKEFFKSILLLIILALTTYFFWINDRKIIFSQVFSSVDGLYLIWGRLFKDIILFFLAFSILVIILDFVIEFILYMKDMMMDKQEIKREYIEQEGHFETKSRRRELHIEILSEQTKSDIRNSKLVVMNPTHIAIGIYFNPEIAPAPFISLIETNQCALAVRKYANEVGIPTVRDVKLARKLYKTHTKYSFVDFEHLDEVLRLIVWLEQVENTH</sequence>
<evidence type="ECO:0000255" key="1"/>
<evidence type="ECO:0000305" key="2"/>
<evidence type="ECO:0007829" key="3">
    <source>
        <dbReference type="PDB" id="2VT1"/>
    </source>
</evidence>
<reference key="1">
    <citation type="journal article" date="1993" name="J. Bacteriol.">
        <title>Eight genes in region 5 that form an operon are essential for invasion of epithelial cells by Shigella flexneri 2a.</title>
        <authorList>
            <person name="Sasakawa C."/>
            <person name="Komatsu K."/>
            <person name="Tobe T."/>
            <person name="Suzuki T."/>
            <person name="Yoshikawa M."/>
        </authorList>
    </citation>
    <scope>NUCLEOTIDE SEQUENCE [GENOMIC DNA]</scope>
    <source>
        <strain>YSH6000 / Serotype 2a</strain>
        <plasmid>pMYSH6000</plasmid>
    </source>
</reference>
<reference key="2">
    <citation type="journal article" date="2000" name="Mol. Microbiol.">
        <title>The virulence plasmid pWR100 and the repertoire of proteins secreted by the type III secretion apparatus of Shigella flexneri.</title>
        <authorList>
            <person name="Buchrieser C."/>
            <person name="Glaser P."/>
            <person name="Rusniok C."/>
            <person name="Nedjari H."/>
            <person name="d'Hauteville H."/>
            <person name="Kunst F."/>
            <person name="Sansonetti P.J."/>
            <person name="Parsot C."/>
        </authorList>
    </citation>
    <scope>NUCLEOTIDE SEQUENCE [GENOMIC DNA]</scope>
    <source>
        <strain>M90T / Serotype 5a</strain>
        <plasmid>pWR100</plasmid>
    </source>
</reference>
<reference key="3">
    <citation type="journal article" date="2001" name="Infect. Immun.">
        <title>Complete DNA sequence and analysis of the large virulence plasmid of Shigella flexneri.</title>
        <authorList>
            <person name="Venkatesan M.M."/>
            <person name="Goldberg M.B."/>
            <person name="Rose D.J."/>
            <person name="Grotbeck E.J."/>
            <person name="Burland V."/>
            <person name="Blattner F.R."/>
        </authorList>
    </citation>
    <scope>NUCLEOTIDE SEQUENCE [GENOMIC DNA]</scope>
    <source>
        <strain>M90T / Serotype 5a</strain>
        <plasmid>pWR501</plasmid>
    </source>
</reference>
<reference key="4">
    <citation type="journal article" date="2002" name="Nucleic Acids Res.">
        <title>Genome sequence of Shigella flexneri 2a: insights into pathogenicity through comparison with genomes of Escherichia coli K12 and O157.</title>
        <authorList>
            <person name="Jin Q."/>
            <person name="Yuan Z."/>
            <person name="Xu J."/>
            <person name="Wang Y."/>
            <person name="Shen Y."/>
            <person name="Lu W."/>
            <person name="Wang J."/>
            <person name="Liu H."/>
            <person name="Yang J."/>
            <person name="Yang F."/>
            <person name="Zhang X."/>
            <person name="Zhang J."/>
            <person name="Yang G."/>
            <person name="Wu H."/>
            <person name="Qu D."/>
            <person name="Dong J."/>
            <person name="Sun L."/>
            <person name="Xue Y."/>
            <person name="Zhao A."/>
            <person name="Gao Y."/>
            <person name="Zhu J."/>
            <person name="Kan B."/>
            <person name="Ding K."/>
            <person name="Chen S."/>
            <person name="Cheng H."/>
            <person name="Yao Z."/>
            <person name="He B."/>
            <person name="Chen R."/>
            <person name="Ma D."/>
            <person name="Qiang B."/>
            <person name="Wen Y."/>
            <person name="Hou Y."/>
            <person name="Yu J."/>
        </authorList>
    </citation>
    <scope>NUCLEOTIDE SEQUENCE [LARGE SCALE GENOMIC DNA]</scope>
    <source>
        <strain>301 / Serotype 2a</strain>
        <plasmid>pCP301</plasmid>
    </source>
</reference>